<reference key="1">
    <citation type="journal article" date="2005" name="Mol. Phylogenet. Evol.">
        <title>Multigene phylogeny of the Old World mice, Murinae, reveals distinct geographic lineages and the declining utility of mitochondrial genes compared to nuclear genes.</title>
        <authorList>
            <person name="Steppan S.J."/>
            <person name="Adkins R.M."/>
            <person name="Spinks P.Q."/>
            <person name="Hale C."/>
        </authorList>
    </citation>
    <scope>NUCLEOTIDE SEQUENCE [GENOMIC DNA]</scope>
</reference>
<keyword id="KW-0186">Copper</keyword>
<keyword id="KW-0249">Electron transport</keyword>
<keyword id="KW-0460">Magnesium</keyword>
<keyword id="KW-0472">Membrane</keyword>
<keyword id="KW-0479">Metal-binding</keyword>
<keyword id="KW-0496">Mitochondrion</keyword>
<keyword id="KW-0999">Mitochondrion inner membrane</keyword>
<keyword id="KW-0597">Phosphoprotein</keyword>
<keyword id="KW-0679">Respiratory chain</keyword>
<keyword id="KW-1278">Translocase</keyword>
<keyword id="KW-0812">Transmembrane</keyword>
<keyword id="KW-1133">Transmembrane helix</keyword>
<keyword id="KW-0813">Transport</keyword>
<name>COX2_PRATU</name>
<comment type="function">
    <text evidence="3">Component of the cytochrome c oxidase, the last enzyme in the mitochondrial electron transport chain which drives oxidative phosphorylation. The respiratory chain contains 3 multisubunit complexes succinate dehydrogenase (complex II, CII), ubiquinol-cytochrome c oxidoreductase (cytochrome b-c1 complex, complex III, CIII) and cytochrome c oxidase (complex IV, CIV), that cooperate to transfer electrons derived from NADH and succinate to molecular oxygen, creating an electrochemical gradient over the inner membrane that drives transmembrane transport and the ATP synthase. Cytochrome c oxidase is the component of the respiratory chain that catalyzes the reduction of oxygen to water. Electrons originating from reduced cytochrome c in the intermembrane space (IMS) are transferred via the dinuclear copper A center (CU(A)) of subunit 2 and heme A of subunit 1 to the active site in subunit 1, a binuclear center (BNC) formed by heme A3 and copper B (CU(B)). The BNC reduces molecular oxygen to 2 water molecules using 4 electrons from cytochrome c in the IMS and 4 protons from the mitochondrial matrix.</text>
</comment>
<comment type="catalytic activity">
    <reaction evidence="3">
        <text>4 Fe(II)-[cytochrome c] + O2 + 8 H(+)(in) = 4 Fe(III)-[cytochrome c] + 2 H2O + 4 H(+)(out)</text>
        <dbReference type="Rhea" id="RHEA:11436"/>
        <dbReference type="Rhea" id="RHEA-COMP:10350"/>
        <dbReference type="Rhea" id="RHEA-COMP:14399"/>
        <dbReference type="ChEBI" id="CHEBI:15377"/>
        <dbReference type="ChEBI" id="CHEBI:15378"/>
        <dbReference type="ChEBI" id="CHEBI:15379"/>
        <dbReference type="ChEBI" id="CHEBI:29033"/>
        <dbReference type="ChEBI" id="CHEBI:29034"/>
        <dbReference type="EC" id="7.1.1.9"/>
    </reaction>
    <physiologicalReaction direction="left-to-right" evidence="3">
        <dbReference type="Rhea" id="RHEA:11437"/>
    </physiologicalReaction>
</comment>
<comment type="cofactor">
    <cofactor evidence="4">
        <name>Cu cation</name>
        <dbReference type="ChEBI" id="CHEBI:23378"/>
    </cofactor>
    <text evidence="4">Binds a dinuclear copper A center per subunit.</text>
</comment>
<comment type="subunit">
    <text evidence="1 4">Component of the cytochrome c oxidase (complex IV, CIV), a multisubunit enzyme composed of 14 subunits. The complex is composed of a catalytic core of 3 subunits MT-CO1, MT-CO2 and MT-CO3, encoded in the mitochondrial DNA, and 11 supernumerary subunits COX4I, COX5A, COX5B, COX6A, COX6B, COX6C, COX7A, COX7B, COX7C, COX8 and NDUFA4, which are encoded in the nuclear genome. The complex exists as a monomer or a dimer and forms supercomplexes (SCs) in the inner mitochondrial membrane with NADH-ubiquinone oxidoreductase (complex I, CI) and ubiquinol-cytochrome c oxidoreductase (cytochrome b-c1 complex, complex III, CIII), resulting in different assemblies (supercomplex SCI(1)III(2)IV(1) and megacomplex MCI(2)III(2)IV(2)) (By similarity). Found in a complex with TMEM177, COA6, COX18, COX20, SCO1 and SCO2. Interacts with TMEM177 in a COX20-dependent manner. Interacts with COX20. Interacts with COX16 (By similarity).</text>
</comment>
<comment type="subcellular location">
    <subcellularLocation>
        <location evidence="4">Mitochondrion inner membrane</location>
        <topology evidence="4">Multi-pass membrane protein</topology>
    </subcellularLocation>
</comment>
<comment type="similarity">
    <text evidence="5">Belongs to the cytochrome c oxidase subunit 2 family.</text>
</comment>
<organism>
    <name type="scientific">Praomys tullbergi</name>
    <name type="common">Tullberg's soft-furred rat</name>
    <dbReference type="NCBI Taxonomy" id="209869"/>
    <lineage>
        <taxon>Eukaryota</taxon>
        <taxon>Metazoa</taxon>
        <taxon>Chordata</taxon>
        <taxon>Craniata</taxon>
        <taxon>Vertebrata</taxon>
        <taxon>Euteleostomi</taxon>
        <taxon>Mammalia</taxon>
        <taxon>Eutheria</taxon>
        <taxon>Euarchontoglires</taxon>
        <taxon>Glires</taxon>
        <taxon>Rodentia</taxon>
        <taxon>Myomorpha</taxon>
        <taxon>Muroidea</taxon>
        <taxon>Muridae</taxon>
        <taxon>Murinae</taxon>
        <taxon>Praomys</taxon>
    </lineage>
</organism>
<evidence type="ECO:0000250" key="1">
    <source>
        <dbReference type="UniProtKB" id="P00403"/>
    </source>
</evidence>
<evidence type="ECO:0000250" key="2">
    <source>
        <dbReference type="UniProtKB" id="P00406"/>
    </source>
</evidence>
<evidence type="ECO:0000250" key="3">
    <source>
        <dbReference type="UniProtKB" id="P00410"/>
    </source>
</evidence>
<evidence type="ECO:0000250" key="4">
    <source>
        <dbReference type="UniProtKB" id="P68530"/>
    </source>
</evidence>
<evidence type="ECO:0000305" key="5"/>
<sequence length="227" mass="25930">MAYPFQLGLQDATSPIMEELMNFHDHTLMIVFLISSLVLYIISLMLTTKLTHTSTMDAQEVETIWTILPAAILILIALPSLRILYMMDEINNPVLTVKTMGHQWYWSYEYTDYEDLCFDSYMIPTNDLKPGELRLLEVDNRVVLPMELPIRMLISSEDVLHSWAVPSLGLKTDAIPGRLNQATVTSNRPGLFYGQCSEICGSNHSFMPIVLEMVPLKYFENWSASMI</sequence>
<accession>Q38RW5</accession>
<geneLocation type="mitochondrion"/>
<dbReference type="EC" id="7.1.1.9"/>
<dbReference type="EMBL" id="DQ019115">
    <property type="protein sequence ID" value="ABA28435.1"/>
    <property type="molecule type" value="Genomic_DNA"/>
</dbReference>
<dbReference type="SMR" id="Q38RW5"/>
<dbReference type="GO" id="GO:0005743">
    <property type="term" value="C:mitochondrial inner membrane"/>
    <property type="evidence" value="ECO:0007669"/>
    <property type="project" value="UniProtKB-SubCell"/>
</dbReference>
<dbReference type="GO" id="GO:0045277">
    <property type="term" value="C:respiratory chain complex IV"/>
    <property type="evidence" value="ECO:0000250"/>
    <property type="project" value="UniProtKB"/>
</dbReference>
<dbReference type="GO" id="GO:0005507">
    <property type="term" value="F:copper ion binding"/>
    <property type="evidence" value="ECO:0007669"/>
    <property type="project" value="InterPro"/>
</dbReference>
<dbReference type="GO" id="GO:0004129">
    <property type="term" value="F:cytochrome-c oxidase activity"/>
    <property type="evidence" value="ECO:0007669"/>
    <property type="project" value="UniProtKB-EC"/>
</dbReference>
<dbReference type="GO" id="GO:0042773">
    <property type="term" value="P:ATP synthesis coupled electron transport"/>
    <property type="evidence" value="ECO:0007669"/>
    <property type="project" value="TreeGrafter"/>
</dbReference>
<dbReference type="CDD" id="cd13912">
    <property type="entry name" value="CcO_II_C"/>
    <property type="match status" value="1"/>
</dbReference>
<dbReference type="FunFam" id="1.10.287.90:FF:000001">
    <property type="entry name" value="Cytochrome c oxidase subunit 2"/>
    <property type="match status" value="1"/>
</dbReference>
<dbReference type="FunFam" id="2.60.40.420:FF:000001">
    <property type="entry name" value="Cytochrome c oxidase subunit 2"/>
    <property type="match status" value="1"/>
</dbReference>
<dbReference type="Gene3D" id="1.10.287.90">
    <property type="match status" value="1"/>
</dbReference>
<dbReference type="Gene3D" id="2.60.40.420">
    <property type="entry name" value="Cupredoxins - blue copper proteins"/>
    <property type="match status" value="1"/>
</dbReference>
<dbReference type="InterPro" id="IPR045187">
    <property type="entry name" value="CcO_II"/>
</dbReference>
<dbReference type="InterPro" id="IPR002429">
    <property type="entry name" value="CcO_II-like_C"/>
</dbReference>
<dbReference type="InterPro" id="IPR034210">
    <property type="entry name" value="CcO_II_C"/>
</dbReference>
<dbReference type="InterPro" id="IPR001505">
    <property type="entry name" value="Copper_CuA"/>
</dbReference>
<dbReference type="InterPro" id="IPR008972">
    <property type="entry name" value="Cupredoxin"/>
</dbReference>
<dbReference type="InterPro" id="IPR014222">
    <property type="entry name" value="Cyt_c_oxidase_su2"/>
</dbReference>
<dbReference type="InterPro" id="IPR011759">
    <property type="entry name" value="Cyt_c_oxidase_su2_TM_dom"/>
</dbReference>
<dbReference type="InterPro" id="IPR036257">
    <property type="entry name" value="Cyt_c_oxidase_su2_TM_sf"/>
</dbReference>
<dbReference type="NCBIfam" id="TIGR02866">
    <property type="entry name" value="CoxB"/>
    <property type="match status" value="1"/>
</dbReference>
<dbReference type="PANTHER" id="PTHR22888:SF9">
    <property type="entry name" value="CYTOCHROME C OXIDASE SUBUNIT 2"/>
    <property type="match status" value="1"/>
</dbReference>
<dbReference type="PANTHER" id="PTHR22888">
    <property type="entry name" value="CYTOCHROME C OXIDASE, SUBUNIT II"/>
    <property type="match status" value="1"/>
</dbReference>
<dbReference type="Pfam" id="PF00116">
    <property type="entry name" value="COX2"/>
    <property type="match status" value="1"/>
</dbReference>
<dbReference type="Pfam" id="PF02790">
    <property type="entry name" value="COX2_TM"/>
    <property type="match status" value="1"/>
</dbReference>
<dbReference type="PRINTS" id="PR01166">
    <property type="entry name" value="CYCOXIDASEII"/>
</dbReference>
<dbReference type="SUPFAM" id="SSF49503">
    <property type="entry name" value="Cupredoxins"/>
    <property type="match status" value="1"/>
</dbReference>
<dbReference type="SUPFAM" id="SSF81464">
    <property type="entry name" value="Cytochrome c oxidase subunit II-like, transmembrane region"/>
    <property type="match status" value="1"/>
</dbReference>
<dbReference type="PROSITE" id="PS00078">
    <property type="entry name" value="COX2"/>
    <property type="match status" value="1"/>
</dbReference>
<dbReference type="PROSITE" id="PS50857">
    <property type="entry name" value="COX2_CUA"/>
    <property type="match status" value="1"/>
</dbReference>
<dbReference type="PROSITE" id="PS50999">
    <property type="entry name" value="COX2_TM"/>
    <property type="match status" value="1"/>
</dbReference>
<gene>
    <name type="primary">MT-CO2</name>
    <name type="synonym">COII</name>
    <name type="synonym">COX2</name>
    <name type="synonym">COXII</name>
    <name type="synonym">MTCO2</name>
</gene>
<proteinExistence type="inferred from homology"/>
<protein>
    <recommendedName>
        <fullName>Cytochrome c oxidase subunit 2</fullName>
        <ecNumber>7.1.1.9</ecNumber>
    </recommendedName>
    <alternativeName>
        <fullName>Cytochrome c oxidase polypeptide II</fullName>
    </alternativeName>
</protein>
<feature type="chain" id="PRO_0000254938" description="Cytochrome c oxidase subunit 2">
    <location>
        <begin position="1"/>
        <end position="227"/>
    </location>
</feature>
<feature type="topological domain" description="Mitochondrial intermembrane" evidence="4">
    <location>
        <begin position="1"/>
        <end position="14"/>
    </location>
</feature>
<feature type="transmembrane region" description="Helical; Name=I" evidence="4">
    <location>
        <begin position="15"/>
        <end position="45"/>
    </location>
</feature>
<feature type="topological domain" description="Mitochondrial matrix" evidence="4">
    <location>
        <begin position="46"/>
        <end position="59"/>
    </location>
</feature>
<feature type="transmembrane region" description="Helical; Name=II" evidence="4">
    <location>
        <begin position="60"/>
        <end position="87"/>
    </location>
</feature>
<feature type="topological domain" description="Mitochondrial intermembrane" evidence="4">
    <location>
        <begin position="88"/>
        <end position="227"/>
    </location>
</feature>
<feature type="binding site" evidence="4">
    <location>
        <position position="161"/>
    </location>
    <ligand>
        <name>Cu cation</name>
        <dbReference type="ChEBI" id="CHEBI:23378"/>
        <label>A1</label>
    </ligand>
</feature>
<feature type="binding site" evidence="4">
    <location>
        <position position="196"/>
    </location>
    <ligand>
        <name>Cu cation</name>
        <dbReference type="ChEBI" id="CHEBI:23378"/>
        <label>A1</label>
    </ligand>
</feature>
<feature type="binding site" evidence="4">
    <location>
        <position position="196"/>
    </location>
    <ligand>
        <name>Cu cation</name>
        <dbReference type="ChEBI" id="CHEBI:23378"/>
        <label>A2</label>
    </ligand>
</feature>
<feature type="binding site" evidence="4">
    <location>
        <position position="198"/>
    </location>
    <ligand>
        <name>Cu cation</name>
        <dbReference type="ChEBI" id="CHEBI:23378"/>
        <label>A2</label>
    </ligand>
</feature>
<feature type="binding site" evidence="4">
    <location>
        <position position="198"/>
    </location>
    <ligand>
        <name>Mg(2+)</name>
        <dbReference type="ChEBI" id="CHEBI:18420"/>
        <note>ligand shared with MT-CO1</note>
    </ligand>
</feature>
<feature type="binding site" evidence="4">
    <location>
        <position position="200"/>
    </location>
    <ligand>
        <name>Cu cation</name>
        <dbReference type="ChEBI" id="CHEBI:23378"/>
        <label>A1</label>
    </ligand>
</feature>
<feature type="binding site" evidence="4">
    <location>
        <position position="200"/>
    </location>
    <ligand>
        <name>Cu cation</name>
        <dbReference type="ChEBI" id="CHEBI:23378"/>
        <label>A2</label>
    </ligand>
</feature>
<feature type="binding site" evidence="4">
    <location>
        <position position="204"/>
    </location>
    <ligand>
        <name>Cu cation</name>
        <dbReference type="ChEBI" id="CHEBI:23378"/>
        <label>A2</label>
    </ligand>
</feature>
<feature type="binding site" evidence="4">
    <location>
        <position position="207"/>
    </location>
    <ligand>
        <name>Cu cation</name>
        <dbReference type="ChEBI" id="CHEBI:23378"/>
        <label>A1</label>
    </ligand>
</feature>
<feature type="modified residue" description="Phosphotyrosine" evidence="2">
    <location>
        <position position="218"/>
    </location>
</feature>